<comment type="function">
    <text evidence="1 2 6">Probable thioesterase; part of the gene cluster B that mediates the biosynthesis of botcinic acid and its botcinin derivatives, acetate-derived polyketides that contribute to virulence when combined with the sesquiterpene botrydial (PubMed:21722295). Botcinic acid and its derivatives have been shown to induce chlorosis and necrosis during host plant infection, but also have antifungal activities (PubMed:21722295). Two polyketide synthases, BOA6 and BOA9, are involved in the biosynthesis of botcinins. BOA6 mediates the formation of the per-methylated tetraketide core by condensation of four units of malonyl-CoA with one unit of acetyl-CoA, which would be methylated in activated methylene groups to yield a bicyclic acid intermediate that could then either be converted to botrylactone derivatives or lose the starter acetate unit through a retro-Claisen type C-C bond cleavage to yield botcinin derivatives (PubMed:23203902). The second polyketide synthase, BOA9, is probably required for the biosynthesis of the tetraketide side chain of botcinins (Probable). The methyltransferase (MT) domain within BOA6 is probably responsible for the incorporation of four methyl groups (Probable). The trans-enoyl reductase BOA5 might take over the enoyl reductase function of BOA6 that misses an ER domain (Probable). The monooxygenases BOA2, BOA3 and BOA4 might be involved in further hydroxylations at C4, C5 and C8, whereas BOA7, close to BOA9, could potentially be involved in the hydroxylation at C4 in the side chain of botcinins (Probable).</text>
</comment>
<comment type="pathway">
    <text evidence="5">Polyketide biosynthesis.</text>
</comment>
<comment type="induction">
    <text evidence="1">Expression of the botcinic acid clusters genes BOA1-13 and BOA17 is coregulated by BCG1 during both in vitro and in planta growth.</text>
</comment>
<comment type="similarity">
    <text evidence="4">Belongs to the AMT4 thioesterase family.</text>
</comment>
<dbReference type="EC" id="3.1.-.-" evidence="5"/>
<dbReference type="EMBL" id="FR718880">
    <property type="protein sequence ID" value="CBX87034.1"/>
    <property type="molecule type" value="Genomic_DNA"/>
</dbReference>
<dbReference type="SMR" id="G0LET9"/>
<dbReference type="ESTHER" id="botfb-boa10">
    <property type="family name" value="Thioesterase"/>
</dbReference>
<dbReference type="EnsemblFungi" id="Bcin01g00100.1">
    <property type="protein sequence ID" value="Bcin01p00100.1"/>
    <property type="gene ID" value="Bcin01g00100"/>
</dbReference>
<dbReference type="VEuPathDB" id="FungiDB:Bcin01g00100"/>
<dbReference type="GO" id="GO:0016787">
    <property type="term" value="F:hydrolase activity"/>
    <property type="evidence" value="ECO:0007669"/>
    <property type="project" value="UniProtKB-KW"/>
</dbReference>
<dbReference type="GO" id="GO:0009058">
    <property type="term" value="P:biosynthetic process"/>
    <property type="evidence" value="ECO:0007669"/>
    <property type="project" value="InterPro"/>
</dbReference>
<dbReference type="Gene3D" id="3.40.50.1820">
    <property type="entry name" value="alpha/beta hydrolase"/>
    <property type="match status" value="1"/>
</dbReference>
<dbReference type="InterPro" id="IPR029058">
    <property type="entry name" value="AB_hydrolase_fold"/>
</dbReference>
<dbReference type="InterPro" id="IPR001031">
    <property type="entry name" value="Thioesterase"/>
</dbReference>
<dbReference type="Pfam" id="PF00975">
    <property type="entry name" value="Thioesterase"/>
    <property type="match status" value="1"/>
</dbReference>
<dbReference type="SUPFAM" id="SSF53474">
    <property type="entry name" value="alpha/beta-Hydrolases"/>
    <property type="match status" value="1"/>
</dbReference>
<feature type="chain" id="PRO_0000444648" description="Probable thioesterase BOA10">
    <location>
        <begin position="1"/>
        <end position="270"/>
    </location>
</feature>
<reference key="1">
    <citation type="journal article" date="2011" name="Mol. Plant Pathol.">
        <title>The Botrytis cinerea phytotoxin botcinic acid requires two polyketide synthases for production and has a redundant role in virulence with botrydial.</title>
        <authorList>
            <person name="Dalmais B."/>
            <person name="Schumacher J."/>
            <person name="Moraga J."/>
            <person name="Le Pecheur P."/>
            <person name="Tudzynski B."/>
            <person name="Collado I.G."/>
            <person name="Viaud M."/>
        </authorList>
    </citation>
    <scope>NUCLEOTIDE SEQUENCE [GENOMIC DNA]</scope>
    <scope>FUNCTION</scope>
    <scope>INDUCTION</scope>
    <scope>PATHWAY</scope>
    <source>
        <strain>B05.10</strain>
    </source>
</reference>
<reference key="2">
    <citation type="journal article" date="2013" name="ChemBioChem">
        <title>A shared biosynthetic pathway for botcinins and botrylactones revealed through gene deletions.</title>
        <authorList>
            <person name="Massaroli M."/>
            <person name="Moraga J."/>
            <person name="Bastos Borges K."/>
            <person name="Ramirez-Fernandez J."/>
            <person name="Viaud M."/>
            <person name="Gonzalez Collado I."/>
            <person name="Duran-Patron R."/>
            <person name="Hernandez-Galan R."/>
        </authorList>
    </citation>
    <scope>FUNCTION</scope>
</reference>
<keyword id="KW-0378">Hydrolase</keyword>
<keyword id="KW-0843">Virulence</keyword>
<proteinExistence type="evidence at transcript level"/>
<name>BOA10_BOTFB</name>
<gene>
    <name evidence="3" type="primary">BOA10</name>
</gene>
<protein>
    <recommendedName>
        <fullName evidence="3">Probable thioesterase BOA10</fullName>
        <ecNumber evidence="5">3.1.-.-</ecNumber>
    </recommendedName>
    <alternativeName>
        <fullName evidence="3">Botcinic acid biosynthesis cluster B protein 10</fullName>
    </alternativeName>
</protein>
<accession>G0LET9</accession>
<organism>
    <name type="scientific">Botryotinia fuckeliana (strain B05.10)</name>
    <name type="common">Noble rot fungus</name>
    <name type="synonym">Botrytis cinerea</name>
    <dbReference type="NCBI Taxonomy" id="332648"/>
    <lineage>
        <taxon>Eukaryota</taxon>
        <taxon>Fungi</taxon>
        <taxon>Dikarya</taxon>
        <taxon>Ascomycota</taxon>
        <taxon>Pezizomycotina</taxon>
        <taxon>Leotiomycetes</taxon>
        <taxon>Helotiales</taxon>
        <taxon>Sclerotiniaceae</taxon>
        <taxon>Botrytis</taxon>
    </lineage>
</organism>
<evidence type="ECO:0000269" key="1">
    <source>
    </source>
</evidence>
<evidence type="ECO:0000269" key="2">
    <source>
    </source>
</evidence>
<evidence type="ECO:0000303" key="3">
    <source>
    </source>
</evidence>
<evidence type="ECO:0000305" key="4"/>
<evidence type="ECO:0000305" key="5">
    <source>
    </source>
</evidence>
<evidence type="ECO:0000305" key="6">
    <source>
    </source>
</evidence>
<sequence length="270" mass="30265">MENPVLIQKAPRRYKSAIPLFLFHDGGGTVLPYYFLESLNRNVWGVSYPHLNDGGTFEHGIKGMGELYAGYIRGKVSRGKVLLGGWSAGGSIAIQVAKCLENIPELCVAGIILLDTPFPDFPDWRPKNSPPVQFHIPVVPDQTAKSRLAQQQAVNDIIHALSVWELPTWENGRRPPPAVFIRALKVVPTEKVVEVDWFREEYALGWQKYPYNFIVEELRVDGDHFSIFTPSYLPELSTKLREALDLLDSKPETGILLDSKLNSSIVISAL</sequence>